<reference key="1">
    <citation type="journal article" date="2002" name="Nature">
        <title>The genome sequence of Schizosaccharomyces pombe.</title>
        <authorList>
            <person name="Wood V."/>
            <person name="Gwilliam R."/>
            <person name="Rajandream M.A."/>
            <person name="Lyne M.H."/>
            <person name="Lyne R."/>
            <person name="Stewart A."/>
            <person name="Sgouros J.G."/>
            <person name="Peat N."/>
            <person name="Hayles J."/>
            <person name="Baker S.G."/>
            <person name="Basham D."/>
            <person name="Bowman S."/>
            <person name="Brooks K."/>
            <person name="Brown D."/>
            <person name="Brown S."/>
            <person name="Chillingworth T."/>
            <person name="Churcher C.M."/>
            <person name="Collins M."/>
            <person name="Connor R."/>
            <person name="Cronin A."/>
            <person name="Davis P."/>
            <person name="Feltwell T."/>
            <person name="Fraser A."/>
            <person name="Gentles S."/>
            <person name="Goble A."/>
            <person name="Hamlin N."/>
            <person name="Harris D.E."/>
            <person name="Hidalgo J."/>
            <person name="Hodgson G."/>
            <person name="Holroyd S."/>
            <person name="Hornsby T."/>
            <person name="Howarth S."/>
            <person name="Huckle E.J."/>
            <person name="Hunt S."/>
            <person name="Jagels K."/>
            <person name="James K.D."/>
            <person name="Jones L."/>
            <person name="Jones M."/>
            <person name="Leather S."/>
            <person name="McDonald S."/>
            <person name="McLean J."/>
            <person name="Mooney P."/>
            <person name="Moule S."/>
            <person name="Mungall K.L."/>
            <person name="Murphy L.D."/>
            <person name="Niblett D."/>
            <person name="Odell C."/>
            <person name="Oliver K."/>
            <person name="O'Neil S."/>
            <person name="Pearson D."/>
            <person name="Quail M.A."/>
            <person name="Rabbinowitsch E."/>
            <person name="Rutherford K.M."/>
            <person name="Rutter S."/>
            <person name="Saunders D."/>
            <person name="Seeger K."/>
            <person name="Sharp S."/>
            <person name="Skelton J."/>
            <person name="Simmonds M.N."/>
            <person name="Squares R."/>
            <person name="Squares S."/>
            <person name="Stevens K."/>
            <person name="Taylor K."/>
            <person name="Taylor R.G."/>
            <person name="Tivey A."/>
            <person name="Walsh S.V."/>
            <person name="Warren T."/>
            <person name="Whitehead S."/>
            <person name="Woodward J.R."/>
            <person name="Volckaert G."/>
            <person name="Aert R."/>
            <person name="Robben J."/>
            <person name="Grymonprez B."/>
            <person name="Weltjens I."/>
            <person name="Vanstreels E."/>
            <person name="Rieger M."/>
            <person name="Schaefer M."/>
            <person name="Mueller-Auer S."/>
            <person name="Gabel C."/>
            <person name="Fuchs M."/>
            <person name="Duesterhoeft A."/>
            <person name="Fritzc C."/>
            <person name="Holzer E."/>
            <person name="Moestl D."/>
            <person name="Hilbert H."/>
            <person name="Borzym K."/>
            <person name="Langer I."/>
            <person name="Beck A."/>
            <person name="Lehrach H."/>
            <person name="Reinhardt R."/>
            <person name="Pohl T.M."/>
            <person name="Eger P."/>
            <person name="Zimmermann W."/>
            <person name="Wedler H."/>
            <person name="Wambutt R."/>
            <person name="Purnelle B."/>
            <person name="Goffeau A."/>
            <person name="Cadieu E."/>
            <person name="Dreano S."/>
            <person name="Gloux S."/>
            <person name="Lelaure V."/>
            <person name="Mottier S."/>
            <person name="Galibert F."/>
            <person name="Aves S.J."/>
            <person name="Xiang Z."/>
            <person name="Hunt C."/>
            <person name="Moore K."/>
            <person name="Hurst S.M."/>
            <person name="Lucas M."/>
            <person name="Rochet M."/>
            <person name="Gaillardin C."/>
            <person name="Tallada V.A."/>
            <person name="Garzon A."/>
            <person name="Thode G."/>
            <person name="Daga R.R."/>
            <person name="Cruzado L."/>
            <person name="Jimenez J."/>
            <person name="Sanchez M."/>
            <person name="del Rey F."/>
            <person name="Benito J."/>
            <person name="Dominguez A."/>
            <person name="Revuelta J.L."/>
            <person name="Moreno S."/>
            <person name="Armstrong J."/>
            <person name="Forsburg S.L."/>
            <person name="Cerutti L."/>
            <person name="Lowe T."/>
            <person name="McCombie W.R."/>
            <person name="Paulsen I."/>
            <person name="Potashkin J."/>
            <person name="Shpakovski G.V."/>
            <person name="Ussery D."/>
            <person name="Barrell B.G."/>
            <person name="Nurse P."/>
        </authorList>
    </citation>
    <scope>NUCLEOTIDE SEQUENCE [LARGE SCALE GENOMIC DNA]</scope>
    <source>
        <strain>972 / ATCC 24843</strain>
    </source>
</reference>
<keyword id="KW-0333">Golgi apparatus</keyword>
<keyword id="KW-0472">Membrane</keyword>
<keyword id="KW-0653">Protein transport</keyword>
<keyword id="KW-1185">Reference proteome</keyword>
<keyword id="KW-0813">Transport</keyword>
<evidence type="ECO:0000250" key="1">
    <source>
        <dbReference type="UniProtKB" id="Q06096"/>
    </source>
</evidence>
<evidence type="ECO:0000250" key="2">
    <source>
        <dbReference type="UniProtKB" id="Q9H9E3"/>
    </source>
</evidence>
<evidence type="ECO:0000305" key="3"/>
<dbReference type="EMBL" id="CU329672">
    <property type="protein sequence ID" value="CAA19344.1"/>
    <property type="molecule type" value="Genomic_DNA"/>
</dbReference>
<dbReference type="PIR" id="T41730">
    <property type="entry name" value="T41730"/>
</dbReference>
<dbReference type="RefSeq" id="NP_588155.1">
    <property type="nucleotide sequence ID" value="NM_001023144.2"/>
</dbReference>
<dbReference type="SMR" id="O74990"/>
<dbReference type="BioGRID" id="275590">
    <property type="interactions" value="5"/>
</dbReference>
<dbReference type="FunCoup" id="O74990">
    <property type="interactions" value="622"/>
</dbReference>
<dbReference type="IntAct" id="O74990">
    <property type="interactions" value="1"/>
</dbReference>
<dbReference type="STRING" id="284812.O74990"/>
<dbReference type="iPTMnet" id="O74990"/>
<dbReference type="PaxDb" id="4896-SPCC338.13.1"/>
<dbReference type="EnsemblFungi" id="SPCC338.13.1">
    <property type="protein sequence ID" value="SPCC338.13.1:pep"/>
    <property type="gene ID" value="SPCC338.13"/>
</dbReference>
<dbReference type="GeneID" id="2539017"/>
<dbReference type="KEGG" id="spo:2539017"/>
<dbReference type="PomBase" id="SPCC338.13">
    <property type="gene designation" value="cog4"/>
</dbReference>
<dbReference type="VEuPathDB" id="FungiDB:SPCC338.13"/>
<dbReference type="eggNOG" id="KOG0412">
    <property type="taxonomic scope" value="Eukaryota"/>
</dbReference>
<dbReference type="HOGENOM" id="CLU_014853_3_1_1"/>
<dbReference type="InParanoid" id="O74990"/>
<dbReference type="OMA" id="YGAMALE"/>
<dbReference type="PhylomeDB" id="O74990"/>
<dbReference type="PRO" id="PR:O74990"/>
<dbReference type="Proteomes" id="UP000002485">
    <property type="component" value="Chromosome III"/>
</dbReference>
<dbReference type="GO" id="GO:0032153">
    <property type="term" value="C:cell division site"/>
    <property type="evidence" value="ECO:0007005"/>
    <property type="project" value="PomBase"/>
</dbReference>
<dbReference type="GO" id="GO:0051286">
    <property type="term" value="C:cell tip"/>
    <property type="evidence" value="ECO:0007005"/>
    <property type="project" value="PomBase"/>
</dbReference>
<dbReference type="GO" id="GO:0000139">
    <property type="term" value="C:Golgi membrane"/>
    <property type="evidence" value="ECO:0007669"/>
    <property type="project" value="UniProtKB-SubCell"/>
</dbReference>
<dbReference type="GO" id="GO:0017119">
    <property type="term" value="C:Golgi transport complex"/>
    <property type="evidence" value="ECO:0000266"/>
    <property type="project" value="PomBase"/>
</dbReference>
<dbReference type="GO" id="GO:0005634">
    <property type="term" value="C:nucleus"/>
    <property type="evidence" value="ECO:0007005"/>
    <property type="project" value="PomBase"/>
</dbReference>
<dbReference type="GO" id="GO:0006886">
    <property type="term" value="P:intracellular protein transport"/>
    <property type="evidence" value="ECO:0000305"/>
    <property type="project" value="PomBase"/>
</dbReference>
<dbReference type="GO" id="GO:0000301">
    <property type="term" value="P:retrograde transport, vesicle recycling within Golgi"/>
    <property type="evidence" value="ECO:0000266"/>
    <property type="project" value="PomBase"/>
</dbReference>
<dbReference type="Gene3D" id="1.20.58.1970">
    <property type="match status" value="1"/>
</dbReference>
<dbReference type="InterPro" id="IPR048682">
    <property type="entry name" value="COG4"/>
</dbReference>
<dbReference type="InterPro" id="IPR048684">
    <property type="entry name" value="COG4_C"/>
</dbReference>
<dbReference type="InterPro" id="IPR013167">
    <property type="entry name" value="COG4_M"/>
</dbReference>
<dbReference type="InterPro" id="IPR048680">
    <property type="entry name" value="COG4_N"/>
</dbReference>
<dbReference type="PANTHER" id="PTHR24016">
    <property type="entry name" value="CONSERVED OLIGOMERIC GOLGI COMPLEX SUBUNIT 4"/>
    <property type="match status" value="1"/>
</dbReference>
<dbReference type="PANTHER" id="PTHR24016:SF0">
    <property type="entry name" value="CONSERVED OLIGOMERIC GOLGI COMPLEX SUBUNIT 4"/>
    <property type="match status" value="1"/>
</dbReference>
<dbReference type="Pfam" id="PF20662">
    <property type="entry name" value="COG4_C"/>
    <property type="match status" value="1"/>
</dbReference>
<dbReference type="Pfam" id="PF08318">
    <property type="entry name" value="COG4_m"/>
    <property type="match status" value="1"/>
</dbReference>
<dbReference type="Pfam" id="PF20663">
    <property type="entry name" value="COG4_N"/>
    <property type="match status" value="1"/>
</dbReference>
<dbReference type="SMART" id="SM00762">
    <property type="entry name" value="Cog4"/>
    <property type="match status" value="1"/>
</dbReference>
<gene>
    <name type="primary">cog4</name>
    <name type="ORF">SPCC338.13</name>
</gene>
<sequence>MDISINDCTDISQIKQRFHDLQVESQRTDEKLERLLSDAQPTEKFNSLIKNMAERLVLFVGQIEELKDAFCNTTIVSEEVIERIKSVDREQNRIKECLLFVRQVRDFKECLQDLNRAMHHQQWEKAADLVHRASSTSPAIIEGKFAHAVVPTAEQPLAPMDTLKEITESLHTLFWREFHKAARNQDQKEITRYFKLFPLIGKEKEGLEAYWHFFGGIIASKARATLDEPPTHALFFAQAFTGLVEHVASIIRAHTPLVQKYYKAKNTITVIEKLQGDCDRQGSIIVNTMFDVRRIDNLVSSIASYKYILLHAKLKNRAFVSDQKELERVSLQTLHPILNEMSAIVSKWNISKIFISRLVLRLSQSDGTSNDPSVQDNLICASIFNSSKMELLLKKQLLPSLLQLETYYFRRSIETSLELEEYYTKVSPWMSSIVDDVMYVTKQVFQRAFFTVSSLFFTRFVNESLIPILRNDYYVYLSHNLLTVCNIIKAQFQRLKNANSIPAKQVENYITLVNSASLSKQYLKSIVDGVSSRLEEVFAFAKDQKLVKKSIDNFLQLTVNFENLCKTSFNMYFPIFLLPRIEQCIDDSFDGINYVLSYEDYTKETEHERLVVTRLRSVWDRVLLLEQFTPENQLSLRSMACEKAASYIENLILYKIQWNDYGAMALENDISSLITIFSNDQANLRHSFERLQEILILLVWESDSTAPEQLINDLNLQLLSIDIVSAIMEKKANVQGED</sequence>
<comment type="function">
    <text evidence="1">Component of the peripheral membrane COG complex that is involved in intra-Golgi protein trafficking. COG is located at the cis-Golgi, and regulates tethering of retrograde intra-Golgi vesicles and possibly a number of other membrane trafficking events (By similarity).</text>
</comment>
<comment type="subunit">
    <text evidence="1">Component of the conserved oligomeric Golgi complex.</text>
</comment>
<comment type="subcellular location">
    <subcellularLocation>
        <location evidence="2">Golgi apparatus membrane</location>
        <topology evidence="2">Peripheral membrane protein</topology>
        <orientation evidence="2">Cytoplasmic side</orientation>
    </subcellularLocation>
</comment>
<comment type="similarity">
    <text evidence="3">Belongs to the COG4 family.</text>
</comment>
<organism>
    <name type="scientific">Schizosaccharomyces pombe (strain 972 / ATCC 24843)</name>
    <name type="common">Fission yeast</name>
    <dbReference type="NCBI Taxonomy" id="284812"/>
    <lineage>
        <taxon>Eukaryota</taxon>
        <taxon>Fungi</taxon>
        <taxon>Dikarya</taxon>
        <taxon>Ascomycota</taxon>
        <taxon>Taphrinomycotina</taxon>
        <taxon>Schizosaccharomycetes</taxon>
        <taxon>Schizosaccharomycetales</taxon>
        <taxon>Schizosaccharomycetaceae</taxon>
        <taxon>Schizosaccharomyces</taxon>
    </lineage>
</organism>
<protein>
    <recommendedName>
        <fullName>Conserved oligomeric Golgi complex subunit 4</fullName>
        <shortName>COG complex subunit 4</shortName>
    </recommendedName>
    <alternativeName>
        <fullName>Component of oligomeric Golgi complex 4</fullName>
    </alternativeName>
</protein>
<proteinExistence type="inferred from homology"/>
<feature type="chain" id="PRO_0000339132" description="Conserved oligomeric Golgi complex subunit 4">
    <location>
        <begin position="1"/>
        <end position="738"/>
    </location>
</feature>
<name>COG4_SCHPO</name>
<accession>O74990</accession>